<name>SSU72_ASPFU</name>
<protein>
    <recommendedName>
        <fullName>RNA polymerase II subunit A C-terminal domain phosphatase ssu72</fullName>
        <shortName>CTD phosphatase ssu72</shortName>
        <ecNumber>3.1.3.16</ecNumber>
    </recommendedName>
    <alternativeName>
        <fullName>Suppressor of SUA7 protein 2 homolog</fullName>
    </alternativeName>
</protein>
<accession>Q4WHY5</accession>
<keyword id="KW-0378">Hydrolase</keyword>
<keyword id="KW-0507">mRNA processing</keyword>
<keyword id="KW-0539">Nucleus</keyword>
<keyword id="KW-0904">Protein phosphatase</keyword>
<keyword id="KW-1185">Reference proteome</keyword>
<dbReference type="EC" id="3.1.3.16"/>
<dbReference type="EMBL" id="AAHF01000008">
    <property type="protein sequence ID" value="EAL87470.1"/>
    <property type="molecule type" value="Genomic_DNA"/>
</dbReference>
<dbReference type="RefSeq" id="XP_749508.1">
    <property type="nucleotide sequence ID" value="XM_744415.1"/>
</dbReference>
<dbReference type="SMR" id="Q4WHY5"/>
<dbReference type="FunCoup" id="Q4WHY5">
    <property type="interactions" value="924"/>
</dbReference>
<dbReference type="STRING" id="330879.Q4WHY5"/>
<dbReference type="EnsemblFungi" id="EAL87470">
    <property type="protein sequence ID" value="EAL87470"/>
    <property type="gene ID" value="AFUA_2G03760"/>
</dbReference>
<dbReference type="GeneID" id="3506785"/>
<dbReference type="KEGG" id="afm:AFUA_2G03760"/>
<dbReference type="VEuPathDB" id="FungiDB:Afu2g03760"/>
<dbReference type="eggNOG" id="KOG2424">
    <property type="taxonomic scope" value="Eukaryota"/>
</dbReference>
<dbReference type="HOGENOM" id="CLU_062463_0_0_1"/>
<dbReference type="InParanoid" id="Q4WHY5"/>
<dbReference type="OMA" id="TQPNVYQ"/>
<dbReference type="OrthoDB" id="57957at2759"/>
<dbReference type="Proteomes" id="UP000002530">
    <property type="component" value="Chromosome 2"/>
</dbReference>
<dbReference type="GO" id="GO:0000785">
    <property type="term" value="C:chromatin"/>
    <property type="evidence" value="ECO:0007669"/>
    <property type="project" value="EnsemblFungi"/>
</dbReference>
<dbReference type="GO" id="GO:0005847">
    <property type="term" value="C:mRNA cleavage and polyadenylation specificity factor complex"/>
    <property type="evidence" value="ECO:0000318"/>
    <property type="project" value="GO_Central"/>
</dbReference>
<dbReference type="GO" id="GO:0004725">
    <property type="term" value="F:protein tyrosine phosphatase activity"/>
    <property type="evidence" value="ECO:0007669"/>
    <property type="project" value="EnsemblFungi"/>
</dbReference>
<dbReference type="GO" id="GO:0008420">
    <property type="term" value="F:RNA polymerase II CTD heptapeptide repeat phosphatase activity"/>
    <property type="evidence" value="ECO:0000318"/>
    <property type="project" value="GO_Central"/>
</dbReference>
<dbReference type="GO" id="GO:0180007">
    <property type="term" value="F:RNA polymerase II CTD heptapeptide repeat S5 phosphatase activity"/>
    <property type="evidence" value="ECO:0007669"/>
    <property type="project" value="EnsemblFungi"/>
</dbReference>
<dbReference type="GO" id="GO:0030643">
    <property type="term" value="P:intracellular phosphate ion homeostasis"/>
    <property type="evidence" value="ECO:0007669"/>
    <property type="project" value="EnsemblFungi"/>
</dbReference>
<dbReference type="GO" id="GO:0031124">
    <property type="term" value="P:mRNA 3'-end processing"/>
    <property type="evidence" value="ECO:0007669"/>
    <property type="project" value="EnsemblFungi"/>
</dbReference>
<dbReference type="GO" id="GO:0032215">
    <property type="term" value="P:positive regulation of telomere maintenance via semi-conservative replication"/>
    <property type="evidence" value="ECO:0007669"/>
    <property type="project" value="EnsemblFungi"/>
</dbReference>
<dbReference type="GO" id="GO:0090052">
    <property type="term" value="P:regulation of pericentric heterochromatin formation"/>
    <property type="evidence" value="ECO:0007669"/>
    <property type="project" value="EnsemblFungi"/>
</dbReference>
<dbReference type="GO" id="GO:1902801">
    <property type="term" value="P:regulation of siRNA-independent facultative heterochromatin formation"/>
    <property type="evidence" value="ECO:0007669"/>
    <property type="project" value="EnsemblFungi"/>
</dbReference>
<dbReference type="GO" id="GO:0009302">
    <property type="term" value="P:sno(s)RNA transcription"/>
    <property type="evidence" value="ECO:0007669"/>
    <property type="project" value="EnsemblFungi"/>
</dbReference>
<dbReference type="GO" id="GO:0006369">
    <property type="term" value="P:termination of RNA polymerase II transcription"/>
    <property type="evidence" value="ECO:0000318"/>
    <property type="project" value="GO_Central"/>
</dbReference>
<dbReference type="GO" id="GO:0030847">
    <property type="term" value="P:termination of RNA polymerase II transcription, exosome-dependent"/>
    <property type="evidence" value="ECO:0007669"/>
    <property type="project" value="EnsemblFungi"/>
</dbReference>
<dbReference type="GO" id="GO:0030846">
    <property type="term" value="P:termination of RNA polymerase II transcription, poly(A)-coupled"/>
    <property type="evidence" value="ECO:0007669"/>
    <property type="project" value="EnsemblFungi"/>
</dbReference>
<dbReference type="GO" id="GO:0031564">
    <property type="term" value="P:transcription antitermination"/>
    <property type="evidence" value="ECO:0007669"/>
    <property type="project" value="EnsemblFungi"/>
</dbReference>
<dbReference type="GO" id="GO:0006368">
    <property type="term" value="P:transcription elongation by RNA polymerase II"/>
    <property type="evidence" value="ECO:0007669"/>
    <property type="project" value="EnsemblFungi"/>
</dbReference>
<dbReference type="GO" id="GO:0001174">
    <property type="term" value="P:transcriptional start site selection at RNA polymerase II promoter"/>
    <property type="evidence" value="ECO:0007669"/>
    <property type="project" value="EnsemblFungi"/>
</dbReference>
<dbReference type="FunFam" id="3.40.50.2300:FF:000039">
    <property type="entry name" value="RNA polymerase II subunit A C-terminal domain phosphatase"/>
    <property type="match status" value="1"/>
</dbReference>
<dbReference type="FunFam" id="3.40.50.2300:FF:000189">
    <property type="entry name" value="SSU72p Phosphatase and transcription/RNA-processing factor"/>
    <property type="match status" value="1"/>
</dbReference>
<dbReference type="Gene3D" id="3.40.50.2300">
    <property type="match status" value="2"/>
</dbReference>
<dbReference type="InterPro" id="IPR006811">
    <property type="entry name" value="RNA_pol_II_suA"/>
</dbReference>
<dbReference type="PANTHER" id="PTHR20383">
    <property type="entry name" value="RNA POLYMERASE II SUBUNIT A C-TERMINAL DOMAIN PHOSPHATASE"/>
    <property type="match status" value="1"/>
</dbReference>
<dbReference type="Pfam" id="PF04722">
    <property type="entry name" value="Ssu72"/>
    <property type="match status" value="1"/>
</dbReference>
<dbReference type="SUPFAM" id="SSF101447">
    <property type="entry name" value="Formin homology 2 domain (FH2 domain)"/>
    <property type="match status" value="1"/>
</dbReference>
<evidence type="ECO:0000250" key="1"/>
<evidence type="ECO:0000256" key="2">
    <source>
        <dbReference type="SAM" id="MobiDB-lite"/>
    </source>
</evidence>
<evidence type="ECO:0000305" key="3"/>
<gene>
    <name type="primary">ssu72</name>
    <name type="ORF">AFUA_2G03760</name>
</gene>
<comment type="function">
    <text evidence="1">Processively dephosphorylates Ser-5 of the heptad repeats YSPTSPS in the C-terminal domain of the largest RNA polymerase II subunit (rpb1).</text>
</comment>
<comment type="function">
    <text evidence="1">Component of the cleavage and polyadenylation factor (CPF) complex, which plays a key role in polyadenylation-dependent pre-mRNA 3'-end formation and cooperates with cleavage factors including the CFIA complex and NAB4/CFIB. Ssu72 is required for 3'-end formation of snoRNAs (By similarity).</text>
</comment>
<comment type="catalytic activity">
    <reaction>
        <text>O-phospho-L-seryl-[protein] + H2O = L-seryl-[protein] + phosphate</text>
        <dbReference type="Rhea" id="RHEA:20629"/>
        <dbReference type="Rhea" id="RHEA-COMP:9863"/>
        <dbReference type="Rhea" id="RHEA-COMP:11604"/>
        <dbReference type="ChEBI" id="CHEBI:15377"/>
        <dbReference type="ChEBI" id="CHEBI:29999"/>
        <dbReference type="ChEBI" id="CHEBI:43474"/>
        <dbReference type="ChEBI" id="CHEBI:83421"/>
        <dbReference type="EC" id="3.1.3.16"/>
    </reaction>
</comment>
<comment type="catalytic activity">
    <reaction>
        <text>O-phospho-L-threonyl-[protein] + H2O = L-threonyl-[protein] + phosphate</text>
        <dbReference type="Rhea" id="RHEA:47004"/>
        <dbReference type="Rhea" id="RHEA-COMP:11060"/>
        <dbReference type="Rhea" id="RHEA-COMP:11605"/>
        <dbReference type="ChEBI" id="CHEBI:15377"/>
        <dbReference type="ChEBI" id="CHEBI:30013"/>
        <dbReference type="ChEBI" id="CHEBI:43474"/>
        <dbReference type="ChEBI" id="CHEBI:61977"/>
        <dbReference type="EC" id="3.1.3.16"/>
    </reaction>
</comment>
<comment type="subunit">
    <text evidence="1">Component of the cleavage and polyadenylation factor (CPF) complex.</text>
</comment>
<comment type="subcellular location">
    <subcellularLocation>
        <location evidence="1">Nucleus</location>
    </subcellularLocation>
</comment>
<comment type="similarity">
    <text evidence="3">Belongs to the SSU72 phosphatase family.</text>
</comment>
<proteinExistence type="inferred from homology"/>
<organism>
    <name type="scientific">Aspergillus fumigatus (strain ATCC MYA-4609 / CBS 101355 / FGSC A1100 / Af293)</name>
    <name type="common">Neosartorya fumigata</name>
    <dbReference type="NCBI Taxonomy" id="330879"/>
    <lineage>
        <taxon>Eukaryota</taxon>
        <taxon>Fungi</taxon>
        <taxon>Dikarya</taxon>
        <taxon>Ascomycota</taxon>
        <taxon>Pezizomycotina</taxon>
        <taxon>Eurotiomycetes</taxon>
        <taxon>Eurotiomycetidae</taxon>
        <taxon>Eurotiales</taxon>
        <taxon>Aspergillaceae</taxon>
        <taxon>Aspergillus</taxon>
        <taxon>Aspergillus subgen. Fumigati</taxon>
    </lineage>
</organism>
<reference key="1">
    <citation type="journal article" date="2005" name="Nature">
        <title>Genomic sequence of the pathogenic and allergenic filamentous fungus Aspergillus fumigatus.</title>
        <authorList>
            <person name="Nierman W.C."/>
            <person name="Pain A."/>
            <person name="Anderson M.J."/>
            <person name="Wortman J.R."/>
            <person name="Kim H.S."/>
            <person name="Arroyo J."/>
            <person name="Berriman M."/>
            <person name="Abe K."/>
            <person name="Archer D.B."/>
            <person name="Bermejo C."/>
            <person name="Bennett J.W."/>
            <person name="Bowyer P."/>
            <person name="Chen D."/>
            <person name="Collins M."/>
            <person name="Coulsen R."/>
            <person name="Davies R."/>
            <person name="Dyer P.S."/>
            <person name="Farman M.L."/>
            <person name="Fedorova N."/>
            <person name="Fedorova N.D."/>
            <person name="Feldblyum T.V."/>
            <person name="Fischer R."/>
            <person name="Fosker N."/>
            <person name="Fraser A."/>
            <person name="Garcia J.L."/>
            <person name="Garcia M.J."/>
            <person name="Goble A."/>
            <person name="Goldman G.H."/>
            <person name="Gomi K."/>
            <person name="Griffith-Jones S."/>
            <person name="Gwilliam R."/>
            <person name="Haas B.J."/>
            <person name="Haas H."/>
            <person name="Harris D.E."/>
            <person name="Horiuchi H."/>
            <person name="Huang J."/>
            <person name="Humphray S."/>
            <person name="Jimenez J."/>
            <person name="Keller N."/>
            <person name="Khouri H."/>
            <person name="Kitamoto K."/>
            <person name="Kobayashi T."/>
            <person name="Konzack S."/>
            <person name="Kulkarni R."/>
            <person name="Kumagai T."/>
            <person name="Lafton A."/>
            <person name="Latge J.-P."/>
            <person name="Li W."/>
            <person name="Lord A."/>
            <person name="Lu C."/>
            <person name="Majoros W.H."/>
            <person name="May G.S."/>
            <person name="Miller B.L."/>
            <person name="Mohamoud Y."/>
            <person name="Molina M."/>
            <person name="Monod M."/>
            <person name="Mouyna I."/>
            <person name="Mulligan S."/>
            <person name="Murphy L.D."/>
            <person name="O'Neil S."/>
            <person name="Paulsen I."/>
            <person name="Penalva M.A."/>
            <person name="Pertea M."/>
            <person name="Price C."/>
            <person name="Pritchard B.L."/>
            <person name="Quail M.A."/>
            <person name="Rabbinowitsch E."/>
            <person name="Rawlins N."/>
            <person name="Rajandream M.A."/>
            <person name="Reichard U."/>
            <person name="Renauld H."/>
            <person name="Robson G.D."/>
            <person name="Rodriguez de Cordoba S."/>
            <person name="Rodriguez-Pena J.M."/>
            <person name="Ronning C.M."/>
            <person name="Rutter S."/>
            <person name="Salzberg S.L."/>
            <person name="Sanchez M."/>
            <person name="Sanchez-Ferrero J.C."/>
            <person name="Saunders D."/>
            <person name="Seeger K."/>
            <person name="Squares R."/>
            <person name="Squares S."/>
            <person name="Takeuchi M."/>
            <person name="Tekaia F."/>
            <person name="Turner G."/>
            <person name="Vazquez de Aldana C.R."/>
            <person name="Weidman J."/>
            <person name="White O."/>
            <person name="Woodward J.R."/>
            <person name="Yu J.-H."/>
            <person name="Fraser C.M."/>
            <person name="Galagan J.E."/>
            <person name="Asai K."/>
            <person name="Machida M."/>
            <person name="Hall N."/>
            <person name="Barrell B.G."/>
            <person name="Denning D.W."/>
        </authorList>
    </citation>
    <scope>NUCLEOTIDE SEQUENCE [LARGE SCALE GENOMIC DNA]</scope>
    <source>
        <strain>ATCC MYA-4609 / CBS 101355 / FGSC A1100 / Af293</strain>
    </source>
</reference>
<sequence>MAHDPRLSSAGTATPNPPPPPPPPPPEPSTTGTGETQAAEPSAPAQSSDSFKLKFCTVCASNQNRSMEAHLRLSTAPSPFPVISFGTGSLVRLPGPSITQPNVYNFNTTSYSQMYDELLAKDERLYRNNGLLNMLDRNRNLKWGPERFQDWVPGMPRVDHVSKGDKGALGTEGGTVDVIITCEERCWDAVVDDLMNKGAALNRPVHVFNVDIRDNHEEALVGGKAILELATRLNDAATQERKIHGAEGWENGNGEARRSFDERVPEILASWQEKWPNLPALWTLAWL</sequence>
<feature type="chain" id="PRO_0000255603" description="RNA polymerase II subunit A C-terminal domain phosphatase ssu72">
    <location>
        <begin position="1"/>
        <end position="287"/>
    </location>
</feature>
<feature type="region of interest" description="Disordered" evidence="2">
    <location>
        <begin position="1"/>
        <end position="47"/>
    </location>
</feature>
<feature type="compositionally biased region" description="Pro residues" evidence="2">
    <location>
        <begin position="15"/>
        <end position="28"/>
    </location>
</feature>
<feature type="compositionally biased region" description="Low complexity" evidence="2">
    <location>
        <begin position="29"/>
        <end position="47"/>
    </location>
</feature>